<dbReference type="EMBL" id="CP000440">
    <property type="protein sequence ID" value="ABI86404.1"/>
    <property type="molecule type" value="Genomic_DNA"/>
</dbReference>
<dbReference type="RefSeq" id="WP_006750836.1">
    <property type="nucleotide sequence ID" value="NZ_CP009798.1"/>
</dbReference>
<dbReference type="SMR" id="Q0BHG9"/>
<dbReference type="GeneID" id="93083747"/>
<dbReference type="KEGG" id="bam:Bamb_0845"/>
<dbReference type="PATRIC" id="fig|339670.21.peg.738"/>
<dbReference type="eggNOG" id="COG0851">
    <property type="taxonomic scope" value="Bacteria"/>
</dbReference>
<dbReference type="Proteomes" id="UP000000662">
    <property type="component" value="Chromosome 1"/>
</dbReference>
<dbReference type="GO" id="GO:0051301">
    <property type="term" value="P:cell division"/>
    <property type="evidence" value="ECO:0007669"/>
    <property type="project" value="UniProtKB-KW"/>
</dbReference>
<dbReference type="GO" id="GO:0032955">
    <property type="term" value="P:regulation of division septum assembly"/>
    <property type="evidence" value="ECO:0007669"/>
    <property type="project" value="InterPro"/>
</dbReference>
<dbReference type="FunFam" id="3.30.1070.10:FF:000001">
    <property type="entry name" value="Cell division topological specificity factor"/>
    <property type="match status" value="1"/>
</dbReference>
<dbReference type="Gene3D" id="3.30.1070.10">
    <property type="entry name" value="Cell division topological specificity factor MinE"/>
    <property type="match status" value="1"/>
</dbReference>
<dbReference type="HAMAP" id="MF_00262">
    <property type="entry name" value="MinE"/>
    <property type="match status" value="1"/>
</dbReference>
<dbReference type="InterPro" id="IPR005527">
    <property type="entry name" value="MinE"/>
</dbReference>
<dbReference type="InterPro" id="IPR036707">
    <property type="entry name" value="MinE_sf"/>
</dbReference>
<dbReference type="NCBIfam" id="TIGR01215">
    <property type="entry name" value="minE"/>
    <property type="match status" value="1"/>
</dbReference>
<dbReference type="NCBIfam" id="NF001422">
    <property type="entry name" value="PRK00296.1"/>
    <property type="match status" value="1"/>
</dbReference>
<dbReference type="NCBIfam" id="NF010595">
    <property type="entry name" value="PRK13989.1"/>
    <property type="match status" value="1"/>
</dbReference>
<dbReference type="Pfam" id="PF03776">
    <property type="entry name" value="MinE"/>
    <property type="match status" value="1"/>
</dbReference>
<dbReference type="SUPFAM" id="SSF55229">
    <property type="entry name" value="Cell division protein MinE topological specificity domain"/>
    <property type="match status" value="1"/>
</dbReference>
<comment type="function">
    <text evidence="1">Prevents the cell division inhibition by proteins MinC and MinD at internal division sites while permitting inhibition at polar sites. This ensures cell division at the proper site by restricting the formation of a division septum at the midpoint of the long axis of the cell.</text>
</comment>
<comment type="similarity">
    <text evidence="1">Belongs to the MinE family.</text>
</comment>
<gene>
    <name evidence="1" type="primary">minE</name>
    <name type="ordered locus">Bamb_0845</name>
</gene>
<protein>
    <recommendedName>
        <fullName evidence="1">Cell division topological specificity factor</fullName>
    </recommendedName>
</protein>
<evidence type="ECO:0000255" key="1">
    <source>
        <dbReference type="HAMAP-Rule" id="MF_00262"/>
    </source>
</evidence>
<keyword id="KW-0131">Cell cycle</keyword>
<keyword id="KW-0132">Cell division</keyword>
<sequence>MSILSFLLGEKKKSASVAKERLQLIIAHERVGGRPPADYLPALQKELVAVISKYVRISNDDIRVSLERQDDLEVLEVKIEIPQA</sequence>
<proteinExistence type="inferred from homology"/>
<reference key="1">
    <citation type="submission" date="2006-08" db="EMBL/GenBank/DDBJ databases">
        <title>Complete sequence of chromosome 1 of Burkholderia cepacia AMMD.</title>
        <authorList>
            <person name="Copeland A."/>
            <person name="Lucas S."/>
            <person name="Lapidus A."/>
            <person name="Barry K."/>
            <person name="Detter J.C."/>
            <person name="Glavina del Rio T."/>
            <person name="Hammon N."/>
            <person name="Israni S."/>
            <person name="Pitluck S."/>
            <person name="Bruce D."/>
            <person name="Chain P."/>
            <person name="Malfatti S."/>
            <person name="Shin M."/>
            <person name="Vergez L."/>
            <person name="Schmutz J."/>
            <person name="Larimer F."/>
            <person name="Land M."/>
            <person name="Hauser L."/>
            <person name="Kyrpides N."/>
            <person name="Kim E."/>
            <person name="Parke J."/>
            <person name="Coenye T."/>
            <person name="Konstantinidis K."/>
            <person name="Ramette A."/>
            <person name="Tiedje J."/>
            <person name="Richardson P."/>
        </authorList>
    </citation>
    <scope>NUCLEOTIDE SEQUENCE [LARGE SCALE GENOMIC DNA]</scope>
    <source>
        <strain>ATCC BAA-244 / DSM 16087 / CCUG 44356 / LMG 19182 / AMMD</strain>
    </source>
</reference>
<name>MINE_BURCM</name>
<feature type="chain" id="PRO_0000298088" description="Cell division topological specificity factor">
    <location>
        <begin position="1"/>
        <end position="84"/>
    </location>
</feature>
<organism>
    <name type="scientific">Burkholderia ambifaria (strain ATCC BAA-244 / DSM 16087 / CCUG 44356 / LMG 19182 / AMMD)</name>
    <name type="common">Burkholderia cepacia (strain AMMD)</name>
    <dbReference type="NCBI Taxonomy" id="339670"/>
    <lineage>
        <taxon>Bacteria</taxon>
        <taxon>Pseudomonadati</taxon>
        <taxon>Pseudomonadota</taxon>
        <taxon>Betaproteobacteria</taxon>
        <taxon>Burkholderiales</taxon>
        <taxon>Burkholderiaceae</taxon>
        <taxon>Burkholderia</taxon>
        <taxon>Burkholderia cepacia complex</taxon>
    </lineage>
</organism>
<accession>Q0BHG9</accession>